<accession>O23095</accession>
<accession>Q9ASX0</accession>
<keyword id="KW-0597">Phosphoprotein</keyword>
<keyword id="KW-1185">Reference proteome</keyword>
<keyword id="KW-0687">Ribonucleoprotein</keyword>
<keyword id="KW-0689">Ribosomal protein</keyword>
<comment type="function">
    <text evidence="1">Plays an important role in the elongation step of protein synthesis.</text>
</comment>
<comment type="subunit">
    <text evidence="1">P1 and P2 exist as dimers at the large ribosomal subunit.</text>
</comment>
<comment type="similarity">
    <text evidence="4">Belongs to the eukaryotic ribosomal protein P1/P2 family.</text>
</comment>
<comment type="sequence caution" evidence="4">
    <conflict type="erroneous gene model prediction">
        <sequence resource="EMBL-CDS" id="AAB62855"/>
    </conflict>
</comment>
<comment type="sequence caution" evidence="4">
    <conflict type="erroneous gene model prediction">
        <sequence resource="EMBL-CDS" id="CAB80890"/>
    </conflict>
</comment>
<proteinExistence type="evidence at protein level"/>
<protein>
    <recommendedName>
        <fullName evidence="3">Large ribosomal subunit protein P1z</fullName>
    </recommendedName>
    <alternativeName>
        <fullName>60S acidic ribosomal protein P1-2</fullName>
    </alternativeName>
</protein>
<feature type="chain" id="PRO_0000157697" description="Large ribosomal subunit protein P1z">
    <location>
        <begin position="1"/>
        <end position="113"/>
    </location>
</feature>
<feature type="region of interest" description="Disordered" evidence="2">
    <location>
        <begin position="87"/>
        <end position="113"/>
    </location>
</feature>
<feature type="modified residue" description="Phosphoserine" evidence="5">
    <location>
        <position position="103"/>
    </location>
</feature>
<reference key="1">
    <citation type="journal article" date="1999" name="Nature">
        <title>Sequence and analysis of chromosome 4 of the plant Arabidopsis thaliana.</title>
        <authorList>
            <person name="Mayer K.F.X."/>
            <person name="Schueller C."/>
            <person name="Wambutt R."/>
            <person name="Murphy G."/>
            <person name="Volckaert G."/>
            <person name="Pohl T."/>
            <person name="Duesterhoeft A."/>
            <person name="Stiekema W."/>
            <person name="Entian K.-D."/>
            <person name="Terryn N."/>
            <person name="Harris B."/>
            <person name="Ansorge W."/>
            <person name="Brandt P."/>
            <person name="Grivell L.A."/>
            <person name="Rieger M."/>
            <person name="Weichselgartner M."/>
            <person name="de Simone V."/>
            <person name="Obermaier B."/>
            <person name="Mache R."/>
            <person name="Mueller M."/>
            <person name="Kreis M."/>
            <person name="Delseny M."/>
            <person name="Puigdomenech P."/>
            <person name="Watson M."/>
            <person name="Schmidtheini T."/>
            <person name="Reichert B."/>
            <person name="Portetelle D."/>
            <person name="Perez-Alonso M."/>
            <person name="Boutry M."/>
            <person name="Bancroft I."/>
            <person name="Vos P."/>
            <person name="Hoheisel J."/>
            <person name="Zimmermann W."/>
            <person name="Wedler H."/>
            <person name="Ridley P."/>
            <person name="Langham S.-A."/>
            <person name="McCullagh B."/>
            <person name="Bilham L."/>
            <person name="Robben J."/>
            <person name="van der Schueren J."/>
            <person name="Grymonprez B."/>
            <person name="Chuang Y.-J."/>
            <person name="Vandenbussche F."/>
            <person name="Braeken M."/>
            <person name="Weltjens I."/>
            <person name="Voet M."/>
            <person name="Bastiaens I."/>
            <person name="Aert R."/>
            <person name="Defoor E."/>
            <person name="Weitzenegger T."/>
            <person name="Bothe G."/>
            <person name="Ramsperger U."/>
            <person name="Hilbert H."/>
            <person name="Braun M."/>
            <person name="Holzer E."/>
            <person name="Brandt A."/>
            <person name="Peters S."/>
            <person name="van Staveren M."/>
            <person name="Dirkse W."/>
            <person name="Mooijman P."/>
            <person name="Klein Lankhorst R."/>
            <person name="Rose M."/>
            <person name="Hauf J."/>
            <person name="Koetter P."/>
            <person name="Berneiser S."/>
            <person name="Hempel S."/>
            <person name="Feldpausch M."/>
            <person name="Lamberth S."/>
            <person name="Van den Daele H."/>
            <person name="De Keyser A."/>
            <person name="Buysshaert C."/>
            <person name="Gielen J."/>
            <person name="Villarroel R."/>
            <person name="De Clercq R."/>
            <person name="van Montagu M."/>
            <person name="Rogers J."/>
            <person name="Cronin A."/>
            <person name="Quail M.A."/>
            <person name="Bray-Allen S."/>
            <person name="Clark L."/>
            <person name="Doggett J."/>
            <person name="Hall S."/>
            <person name="Kay M."/>
            <person name="Lennard N."/>
            <person name="McLay K."/>
            <person name="Mayes R."/>
            <person name="Pettett A."/>
            <person name="Rajandream M.A."/>
            <person name="Lyne M."/>
            <person name="Benes V."/>
            <person name="Rechmann S."/>
            <person name="Borkova D."/>
            <person name="Bloecker H."/>
            <person name="Scharfe M."/>
            <person name="Grimm M."/>
            <person name="Loehnert T.-H."/>
            <person name="Dose S."/>
            <person name="de Haan M."/>
            <person name="Maarse A.C."/>
            <person name="Schaefer M."/>
            <person name="Mueller-Auer S."/>
            <person name="Gabel C."/>
            <person name="Fuchs M."/>
            <person name="Fartmann B."/>
            <person name="Granderath K."/>
            <person name="Dauner D."/>
            <person name="Herzl A."/>
            <person name="Neumann S."/>
            <person name="Argiriou A."/>
            <person name="Vitale D."/>
            <person name="Liguori R."/>
            <person name="Piravandi E."/>
            <person name="Massenet O."/>
            <person name="Quigley F."/>
            <person name="Clabauld G."/>
            <person name="Muendlein A."/>
            <person name="Felber R."/>
            <person name="Schnabl S."/>
            <person name="Hiller R."/>
            <person name="Schmidt W."/>
            <person name="Lecharny A."/>
            <person name="Aubourg S."/>
            <person name="Chefdor F."/>
            <person name="Cooke R."/>
            <person name="Berger C."/>
            <person name="Monfort A."/>
            <person name="Casacuberta E."/>
            <person name="Gibbons T."/>
            <person name="Weber N."/>
            <person name="Vandenbol M."/>
            <person name="Bargues M."/>
            <person name="Terol J."/>
            <person name="Torres A."/>
            <person name="Perez-Perez A."/>
            <person name="Purnelle B."/>
            <person name="Bent E."/>
            <person name="Johnson S."/>
            <person name="Tacon D."/>
            <person name="Jesse T."/>
            <person name="Heijnen L."/>
            <person name="Schwarz S."/>
            <person name="Scholler P."/>
            <person name="Heber S."/>
            <person name="Francs P."/>
            <person name="Bielke C."/>
            <person name="Frishman D."/>
            <person name="Haase D."/>
            <person name="Lemcke K."/>
            <person name="Mewes H.-W."/>
            <person name="Stocker S."/>
            <person name="Zaccaria P."/>
            <person name="Bevan M."/>
            <person name="Wilson R.K."/>
            <person name="de la Bastide M."/>
            <person name="Habermann K."/>
            <person name="Parnell L."/>
            <person name="Dedhia N."/>
            <person name="Gnoj L."/>
            <person name="Schutz K."/>
            <person name="Huang E."/>
            <person name="Spiegel L."/>
            <person name="Sekhon M."/>
            <person name="Murray J."/>
            <person name="Sheet P."/>
            <person name="Cordes M."/>
            <person name="Abu-Threideh J."/>
            <person name="Stoneking T."/>
            <person name="Kalicki J."/>
            <person name="Graves T."/>
            <person name="Harmon G."/>
            <person name="Edwards J."/>
            <person name="Latreille P."/>
            <person name="Courtney L."/>
            <person name="Cloud J."/>
            <person name="Abbott A."/>
            <person name="Scott K."/>
            <person name="Johnson D."/>
            <person name="Minx P."/>
            <person name="Bentley D."/>
            <person name="Fulton B."/>
            <person name="Miller N."/>
            <person name="Greco T."/>
            <person name="Kemp K."/>
            <person name="Kramer J."/>
            <person name="Fulton L."/>
            <person name="Mardis E."/>
            <person name="Dante M."/>
            <person name="Pepin K."/>
            <person name="Hillier L.W."/>
            <person name="Nelson J."/>
            <person name="Spieth J."/>
            <person name="Ryan E."/>
            <person name="Andrews S."/>
            <person name="Geisel C."/>
            <person name="Layman D."/>
            <person name="Du H."/>
            <person name="Ali J."/>
            <person name="Berghoff A."/>
            <person name="Jones K."/>
            <person name="Drone K."/>
            <person name="Cotton M."/>
            <person name="Joshu C."/>
            <person name="Antonoiu B."/>
            <person name="Zidanic M."/>
            <person name="Strong C."/>
            <person name="Sun H."/>
            <person name="Lamar B."/>
            <person name="Yordan C."/>
            <person name="Ma P."/>
            <person name="Zhong J."/>
            <person name="Preston R."/>
            <person name="Vil D."/>
            <person name="Shekher M."/>
            <person name="Matero A."/>
            <person name="Shah R."/>
            <person name="Swaby I.K."/>
            <person name="O'Shaughnessy A."/>
            <person name="Rodriguez M."/>
            <person name="Hoffman J."/>
            <person name="Till S."/>
            <person name="Granat S."/>
            <person name="Shohdy N."/>
            <person name="Hasegawa A."/>
            <person name="Hameed A."/>
            <person name="Lodhi M."/>
            <person name="Johnson A."/>
            <person name="Chen E."/>
            <person name="Marra M.A."/>
            <person name="Martienssen R."/>
            <person name="McCombie W.R."/>
        </authorList>
    </citation>
    <scope>NUCLEOTIDE SEQUENCE [LARGE SCALE GENOMIC DNA]</scope>
    <source>
        <strain>cv. Columbia</strain>
    </source>
</reference>
<reference key="2">
    <citation type="journal article" date="2017" name="Plant J.">
        <title>Araport11: a complete reannotation of the Arabidopsis thaliana reference genome.</title>
        <authorList>
            <person name="Cheng C.Y."/>
            <person name="Krishnakumar V."/>
            <person name="Chan A.P."/>
            <person name="Thibaud-Nissen F."/>
            <person name="Schobel S."/>
            <person name="Town C.D."/>
        </authorList>
    </citation>
    <scope>GENOME REANNOTATION</scope>
    <source>
        <strain>cv. Columbia</strain>
    </source>
</reference>
<reference key="3">
    <citation type="journal article" date="2003" name="Science">
        <title>Empirical analysis of transcriptional activity in the Arabidopsis genome.</title>
        <authorList>
            <person name="Yamada K."/>
            <person name="Lim J."/>
            <person name="Dale J.M."/>
            <person name="Chen H."/>
            <person name="Shinn P."/>
            <person name="Palm C.J."/>
            <person name="Southwick A.M."/>
            <person name="Wu H.C."/>
            <person name="Kim C.J."/>
            <person name="Nguyen M."/>
            <person name="Pham P.K."/>
            <person name="Cheuk R.F."/>
            <person name="Karlin-Newmann G."/>
            <person name="Liu S.X."/>
            <person name="Lam B."/>
            <person name="Sakano H."/>
            <person name="Wu T."/>
            <person name="Yu G."/>
            <person name="Miranda M."/>
            <person name="Quach H.L."/>
            <person name="Tripp M."/>
            <person name="Chang C.H."/>
            <person name="Lee J.M."/>
            <person name="Toriumi M.J."/>
            <person name="Chan M.M."/>
            <person name="Tang C.C."/>
            <person name="Onodera C.S."/>
            <person name="Deng J.M."/>
            <person name="Akiyama K."/>
            <person name="Ansari Y."/>
            <person name="Arakawa T."/>
            <person name="Banh J."/>
            <person name="Banno F."/>
            <person name="Bowser L."/>
            <person name="Brooks S.Y."/>
            <person name="Carninci P."/>
            <person name="Chao Q."/>
            <person name="Choy N."/>
            <person name="Enju A."/>
            <person name="Goldsmith A.D."/>
            <person name="Gurjal M."/>
            <person name="Hansen N.F."/>
            <person name="Hayashizaki Y."/>
            <person name="Johnson-Hopson C."/>
            <person name="Hsuan V.W."/>
            <person name="Iida K."/>
            <person name="Karnes M."/>
            <person name="Khan S."/>
            <person name="Koesema E."/>
            <person name="Ishida J."/>
            <person name="Jiang P.X."/>
            <person name="Jones T."/>
            <person name="Kawai J."/>
            <person name="Kamiya A."/>
            <person name="Meyers C."/>
            <person name="Nakajima M."/>
            <person name="Narusaka M."/>
            <person name="Seki M."/>
            <person name="Sakurai T."/>
            <person name="Satou M."/>
            <person name="Tamse R."/>
            <person name="Vaysberg M."/>
            <person name="Wallender E.K."/>
            <person name="Wong C."/>
            <person name="Yamamura Y."/>
            <person name="Yuan S."/>
            <person name="Shinozaki K."/>
            <person name="Davis R.W."/>
            <person name="Theologis A."/>
            <person name="Ecker J.R."/>
        </authorList>
    </citation>
    <scope>NUCLEOTIDE SEQUENCE [LARGE SCALE MRNA]</scope>
    <source>
        <strain>cv. Columbia</strain>
    </source>
</reference>
<reference key="4">
    <citation type="submission" date="2002-03" db="EMBL/GenBank/DDBJ databases">
        <title>Full-length cDNA from Arabidopsis thaliana.</title>
        <authorList>
            <person name="Brover V.V."/>
            <person name="Troukhan M.E."/>
            <person name="Alexandrov N.A."/>
            <person name="Lu Y.-P."/>
            <person name="Flavell R.B."/>
            <person name="Feldmann K.A."/>
        </authorList>
    </citation>
    <scope>NUCLEOTIDE SEQUENCE [LARGE SCALE MRNA]</scope>
</reference>
<reference key="5">
    <citation type="journal article" date="2001" name="Plant Physiol.">
        <title>The organization of cytoplasmic ribosomal protein genes in the Arabidopsis genome.</title>
        <authorList>
            <person name="Barakat A."/>
            <person name="Szick-Miranda K."/>
            <person name="Chang I.-F."/>
            <person name="Guyot R."/>
            <person name="Blanc G."/>
            <person name="Cooke R."/>
            <person name="Delseny M."/>
            <person name="Bailey-Serres J."/>
        </authorList>
    </citation>
    <scope>GENE FAMILY ORGANIZATION</scope>
    <scope>NOMENCLATURE</scope>
</reference>
<reference key="6">
    <citation type="journal article" date="2009" name="Plant Physiol.">
        <title>Large-scale Arabidopsis phosphoproteome profiling reveals novel chloroplast kinase substrates and phosphorylation networks.</title>
        <authorList>
            <person name="Reiland S."/>
            <person name="Messerli G."/>
            <person name="Baerenfaller K."/>
            <person name="Gerrits B."/>
            <person name="Endler A."/>
            <person name="Grossmann J."/>
            <person name="Gruissem W."/>
            <person name="Baginsky S."/>
        </authorList>
    </citation>
    <scope>PHOSPHORYLATION [LARGE SCALE ANALYSIS] AT SER-103</scope>
    <scope>IDENTIFICATION BY MASS SPECTROMETRY [LARGE SCALE ANALYSIS]</scope>
</reference>
<reference key="7">
    <citation type="journal article" date="2023" name="Plant Cell">
        <title>An updated nomenclature for plant ribosomal protein genes.</title>
        <authorList>
            <person name="Scarpin M.R."/>
            <person name="Busche M."/>
            <person name="Martinez R.E."/>
            <person name="Harper L.C."/>
            <person name="Reiser L."/>
            <person name="Szakonyi D."/>
            <person name="Merchante C."/>
            <person name="Lan T."/>
            <person name="Xiong W."/>
            <person name="Mo B."/>
            <person name="Tang G."/>
            <person name="Chen X."/>
            <person name="Bailey-Serres J."/>
            <person name="Browning K.S."/>
            <person name="Brunkard J.O."/>
        </authorList>
    </citation>
    <scope>NOMENCLATURE</scope>
</reference>
<organism>
    <name type="scientific">Arabidopsis thaliana</name>
    <name type="common">Mouse-ear cress</name>
    <dbReference type="NCBI Taxonomy" id="3702"/>
    <lineage>
        <taxon>Eukaryota</taxon>
        <taxon>Viridiplantae</taxon>
        <taxon>Streptophyta</taxon>
        <taxon>Embryophyta</taxon>
        <taxon>Tracheophyta</taxon>
        <taxon>Spermatophyta</taxon>
        <taxon>Magnoliopsida</taxon>
        <taxon>eudicotyledons</taxon>
        <taxon>Gunneridae</taxon>
        <taxon>Pentapetalae</taxon>
        <taxon>rosids</taxon>
        <taxon>malvids</taxon>
        <taxon>Brassicales</taxon>
        <taxon>Brassicaceae</taxon>
        <taxon>Camelineae</taxon>
        <taxon>Arabidopsis</taxon>
    </lineage>
</organism>
<gene>
    <name type="primary">RPP1B</name>
    <name type="ordered locus">At4g00810</name>
    <name type="ORF">T18A10.9</name>
</gene>
<dbReference type="EMBL" id="AF013294">
    <property type="protein sequence ID" value="AAB62855.1"/>
    <property type="status" value="ALT_SEQ"/>
    <property type="molecule type" value="Genomic_DNA"/>
</dbReference>
<dbReference type="EMBL" id="AL161472">
    <property type="protein sequence ID" value="CAB80890.1"/>
    <property type="status" value="ALT_SEQ"/>
    <property type="molecule type" value="Genomic_DNA"/>
</dbReference>
<dbReference type="EMBL" id="CP002687">
    <property type="protein sequence ID" value="AEE81937.1"/>
    <property type="molecule type" value="Genomic_DNA"/>
</dbReference>
<dbReference type="EMBL" id="CP002687">
    <property type="protein sequence ID" value="AEE81938.1"/>
    <property type="molecule type" value="Genomic_DNA"/>
</dbReference>
<dbReference type="EMBL" id="AF361624">
    <property type="protein sequence ID" value="AAK32792.1"/>
    <property type="molecule type" value="mRNA"/>
</dbReference>
<dbReference type="EMBL" id="AY055096">
    <property type="protein sequence ID" value="AAL05896.1"/>
    <property type="molecule type" value="mRNA"/>
</dbReference>
<dbReference type="EMBL" id="AY086636">
    <property type="protein sequence ID" value="AAM63694.1"/>
    <property type="molecule type" value="mRNA"/>
</dbReference>
<dbReference type="PIR" id="T01565">
    <property type="entry name" value="T01565"/>
</dbReference>
<dbReference type="RefSeq" id="NP_567190.1">
    <property type="nucleotide sequence ID" value="NM_116307.4"/>
</dbReference>
<dbReference type="RefSeq" id="NP_849278.1">
    <property type="nucleotide sequence ID" value="NM_178947.4"/>
</dbReference>
<dbReference type="SMR" id="O23095"/>
<dbReference type="BioGRID" id="13295">
    <property type="interactions" value="6"/>
</dbReference>
<dbReference type="FunCoup" id="O23095">
    <property type="interactions" value="950"/>
</dbReference>
<dbReference type="STRING" id="3702.O23095"/>
<dbReference type="iPTMnet" id="O23095"/>
<dbReference type="PaxDb" id="3702-AT4G00810.1"/>
<dbReference type="ProteomicsDB" id="228129"/>
<dbReference type="EnsemblPlants" id="AT4G00810.1">
    <property type="protein sequence ID" value="AT4G00810.1"/>
    <property type="gene ID" value="AT4G00810"/>
</dbReference>
<dbReference type="EnsemblPlants" id="AT4G00810.2">
    <property type="protein sequence ID" value="AT4G00810.2"/>
    <property type="gene ID" value="AT4G00810"/>
</dbReference>
<dbReference type="GeneID" id="828004"/>
<dbReference type="Gramene" id="AT4G00810.1">
    <property type="protein sequence ID" value="AT4G00810.1"/>
    <property type="gene ID" value="AT4G00810"/>
</dbReference>
<dbReference type="Gramene" id="AT4G00810.2">
    <property type="protein sequence ID" value="AT4G00810.2"/>
    <property type="gene ID" value="AT4G00810"/>
</dbReference>
<dbReference type="KEGG" id="ath:AT4G00810"/>
<dbReference type="Araport" id="AT4G00810"/>
<dbReference type="TAIR" id="AT4G00810">
    <property type="gene designation" value="RPP1B"/>
</dbReference>
<dbReference type="eggNOG" id="KOG1762">
    <property type="taxonomic scope" value="Eukaryota"/>
</dbReference>
<dbReference type="HOGENOM" id="CLU_114656_1_2_1"/>
<dbReference type="InParanoid" id="O23095"/>
<dbReference type="OMA" id="NVWADVY"/>
<dbReference type="OrthoDB" id="2194681at2759"/>
<dbReference type="PhylomeDB" id="O23095"/>
<dbReference type="CD-CODE" id="4299E36E">
    <property type="entry name" value="Nucleolus"/>
</dbReference>
<dbReference type="PRO" id="PR:O23095"/>
<dbReference type="Proteomes" id="UP000006548">
    <property type="component" value="Chromosome 4"/>
</dbReference>
<dbReference type="ExpressionAtlas" id="O23095">
    <property type="expression patterns" value="baseline and differential"/>
</dbReference>
<dbReference type="GO" id="GO:0005829">
    <property type="term" value="C:cytosol"/>
    <property type="evidence" value="ECO:0007005"/>
    <property type="project" value="TAIR"/>
</dbReference>
<dbReference type="GO" id="GO:0022626">
    <property type="term" value="C:cytosolic ribosome"/>
    <property type="evidence" value="ECO:0007005"/>
    <property type="project" value="TAIR"/>
</dbReference>
<dbReference type="GO" id="GO:1990904">
    <property type="term" value="C:ribonucleoprotein complex"/>
    <property type="evidence" value="ECO:0007669"/>
    <property type="project" value="UniProtKB-KW"/>
</dbReference>
<dbReference type="GO" id="GO:0003735">
    <property type="term" value="F:structural constituent of ribosome"/>
    <property type="evidence" value="ECO:0000314"/>
    <property type="project" value="CAFA"/>
</dbReference>
<dbReference type="GO" id="GO:0006414">
    <property type="term" value="P:translational elongation"/>
    <property type="evidence" value="ECO:0007669"/>
    <property type="project" value="InterPro"/>
</dbReference>
<dbReference type="CDD" id="cd05831">
    <property type="entry name" value="Ribosomal_P1"/>
    <property type="match status" value="1"/>
</dbReference>
<dbReference type="FunFam" id="1.10.10.1410:FF:000001">
    <property type="entry name" value="60S acidic ribosomal protein P1"/>
    <property type="match status" value="1"/>
</dbReference>
<dbReference type="Gene3D" id="1.10.10.1410">
    <property type="match status" value="1"/>
</dbReference>
<dbReference type="HAMAP" id="MF_01478">
    <property type="entry name" value="Ribosomal_L12_arch"/>
    <property type="match status" value="1"/>
</dbReference>
<dbReference type="InterPro" id="IPR038716">
    <property type="entry name" value="P1/P2_N_sf"/>
</dbReference>
<dbReference type="InterPro" id="IPR027534">
    <property type="entry name" value="Ribosomal_P1/P2"/>
</dbReference>
<dbReference type="PANTHER" id="PTHR45696">
    <property type="entry name" value="60S ACIDIC RIBOSOMAL PROTEIN P1"/>
    <property type="match status" value="1"/>
</dbReference>
<dbReference type="PANTHER" id="PTHR45696:SF42">
    <property type="entry name" value="LARGE RIBOSOMAL SUBUNIT PROTEIN P1W-RELATED"/>
    <property type="match status" value="1"/>
</dbReference>
<dbReference type="Pfam" id="PF00428">
    <property type="entry name" value="Ribosomal_60s"/>
    <property type="match status" value="1"/>
</dbReference>
<name>RLA12_ARATH</name>
<sequence length="113" mass="11307">MSTVGELACSYAVMILEDEGIAITSDKIATLVKAAGVEIESYWPMLFAKMAEKRNVTDLIMNVGAGGGGGGAPVSAAAPAAAGGAAAAAPAKEEKKDEPAEESDGDLGFGLFD</sequence>
<evidence type="ECO:0000250" key="1"/>
<evidence type="ECO:0000256" key="2">
    <source>
        <dbReference type="SAM" id="MobiDB-lite"/>
    </source>
</evidence>
<evidence type="ECO:0000303" key="3">
    <source>
    </source>
</evidence>
<evidence type="ECO:0000305" key="4"/>
<evidence type="ECO:0007744" key="5">
    <source>
    </source>
</evidence>